<dbReference type="EC" id="3.1.-.-" evidence="1"/>
<dbReference type="EMBL" id="CP000116">
    <property type="protein sequence ID" value="AAZ98657.1"/>
    <property type="molecule type" value="Genomic_DNA"/>
</dbReference>
<dbReference type="RefSeq" id="WP_011313216.1">
    <property type="nucleotide sequence ID" value="NC_007404.1"/>
</dbReference>
<dbReference type="SMR" id="Q3SFF3"/>
<dbReference type="STRING" id="292415.Tbd_2704"/>
<dbReference type="KEGG" id="tbd:Tbd_2704"/>
<dbReference type="eggNOG" id="COG0319">
    <property type="taxonomic scope" value="Bacteria"/>
</dbReference>
<dbReference type="HOGENOM" id="CLU_106710_0_1_4"/>
<dbReference type="OrthoDB" id="9807740at2"/>
<dbReference type="Proteomes" id="UP000008291">
    <property type="component" value="Chromosome"/>
</dbReference>
<dbReference type="GO" id="GO:0005737">
    <property type="term" value="C:cytoplasm"/>
    <property type="evidence" value="ECO:0007669"/>
    <property type="project" value="UniProtKB-SubCell"/>
</dbReference>
<dbReference type="GO" id="GO:0004222">
    <property type="term" value="F:metalloendopeptidase activity"/>
    <property type="evidence" value="ECO:0007669"/>
    <property type="project" value="InterPro"/>
</dbReference>
<dbReference type="GO" id="GO:0004521">
    <property type="term" value="F:RNA endonuclease activity"/>
    <property type="evidence" value="ECO:0007669"/>
    <property type="project" value="UniProtKB-UniRule"/>
</dbReference>
<dbReference type="GO" id="GO:0008270">
    <property type="term" value="F:zinc ion binding"/>
    <property type="evidence" value="ECO:0007669"/>
    <property type="project" value="UniProtKB-UniRule"/>
</dbReference>
<dbReference type="GO" id="GO:0006364">
    <property type="term" value="P:rRNA processing"/>
    <property type="evidence" value="ECO:0007669"/>
    <property type="project" value="UniProtKB-UniRule"/>
</dbReference>
<dbReference type="Gene3D" id="3.40.390.30">
    <property type="entry name" value="Metalloproteases ('zincins'), catalytic domain"/>
    <property type="match status" value="1"/>
</dbReference>
<dbReference type="HAMAP" id="MF_00009">
    <property type="entry name" value="Endoribonucl_YbeY"/>
    <property type="match status" value="1"/>
</dbReference>
<dbReference type="InterPro" id="IPR023091">
    <property type="entry name" value="MetalPrtase_cat_dom_sf_prd"/>
</dbReference>
<dbReference type="InterPro" id="IPR002036">
    <property type="entry name" value="YbeY"/>
</dbReference>
<dbReference type="InterPro" id="IPR020549">
    <property type="entry name" value="YbeY_CS"/>
</dbReference>
<dbReference type="NCBIfam" id="TIGR00043">
    <property type="entry name" value="rRNA maturation RNase YbeY"/>
    <property type="match status" value="1"/>
</dbReference>
<dbReference type="PANTHER" id="PTHR46986">
    <property type="entry name" value="ENDORIBONUCLEASE YBEY, CHLOROPLASTIC"/>
    <property type="match status" value="1"/>
</dbReference>
<dbReference type="PANTHER" id="PTHR46986:SF1">
    <property type="entry name" value="ENDORIBONUCLEASE YBEY, CHLOROPLASTIC"/>
    <property type="match status" value="1"/>
</dbReference>
<dbReference type="Pfam" id="PF02130">
    <property type="entry name" value="YbeY"/>
    <property type="match status" value="1"/>
</dbReference>
<dbReference type="SUPFAM" id="SSF55486">
    <property type="entry name" value="Metalloproteases ('zincins'), catalytic domain"/>
    <property type="match status" value="1"/>
</dbReference>
<dbReference type="PROSITE" id="PS01306">
    <property type="entry name" value="UPF0054"/>
    <property type="match status" value="1"/>
</dbReference>
<gene>
    <name evidence="1" type="primary">ybeY</name>
    <name type="ordered locus">Tbd_2704</name>
</gene>
<keyword id="KW-0963">Cytoplasm</keyword>
<keyword id="KW-0255">Endonuclease</keyword>
<keyword id="KW-0378">Hydrolase</keyword>
<keyword id="KW-0479">Metal-binding</keyword>
<keyword id="KW-0540">Nuclease</keyword>
<keyword id="KW-1185">Reference proteome</keyword>
<keyword id="KW-0690">Ribosome biogenesis</keyword>
<keyword id="KW-0698">rRNA processing</keyword>
<keyword id="KW-0862">Zinc</keyword>
<reference key="1">
    <citation type="journal article" date="2006" name="J. Bacteriol.">
        <title>The genome sequence of the obligately chemolithoautotrophic, facultatively anaerobic bacterium Thiobacillus denitrificans.</title>
        <authorList>
            <person name="Beller H.R."/>
            <person name="Chain P.S."/>
            <person name="Letain T.E."/>
            <person name="Chakicherla A."/>
            <person name="Larimer F.W."/>
            <person name="Richardson P.M."/>
            <person name="Coleman M.A."/>
            <person name="Wood A.P."/>
            <person name="Kelly D.P."/>
        </authorList>
    </citation>
    <scope>NUCLEOTIDE SEQUENCE [LARGE SCALE GENOMIC DNA]</scope>
    <source>
        <strain>ATCC 25259 / T1</strain>
    </source>
</reference>
<protein>
    <recommendedName>
        <fullName evidence="1">Endoribonuclease YbeY</fullName>
        <ecNumber evidence="1">3.1.-.-</ecNumber>
    </recommendedName>
</protein>
<proteinExistence type="inferred from homology"/>
<comment type="function">
    <text evidence="1">Single strand-specific metallo-endoribonuclease involved in late-stage 70S ribosome quality control and in maturation of the 3' terminus of the 16S rRNA.</text>
</comment>
<comment type="cofactor">
    <cofactor evidence="1">
        <name>Zn(2+)</name>
        <dbReference type="ChEBI" id="CHEBI:29105"/>
    </cofactor>
    <text evidence="1">Binds 1 zinc ion.</text>
</comment>
<comment type="subcellular location">
    <subcellularLocation>
        <location evidence="1">Cytoplasm</location>
    </subcellularLocation>
</comment>
<comment type="similarity">
    <text evidence="1">Belongs to the endoribonuclease YbeY family.</text>
</comment>
<accession>Q3SFF3</accession>
<sequence length="147" mass="16409">MAPELRLAVQFASGADDLPSRAQIRRWVAAALEHDAEITVRIVDADEAQALNRAYRDKDYVPNVLTFEYGEIAPALLGGDVVICAPVVEREAREQGKPLGHHYAHMTVHGVLHLQGYDHVDAADAERMETREAAILKRFHIPHPYHS</sequence>
<name>YBEY_THIDA</name>
<evidence type="ECO:0000255" key="1">
    <source>
        <dbReference type="HAMAP-Rule" id="MF_00009"/>
    </source>
</evidence>
<organism>
    <name type="scientific">Thiobacillus denitrificans (strain ATCC 25259 / T1)</name>
    <dbReference type="NCBI Taxonomy" id="292415"/>
    <lineage>
        <taxon>Bacteria</taxon>
        <taxon>Pseudomonadati</taxon>
        <taxon>Pseudomonadota</taxon>
        <taxon>Betaproteobacteria</taxon>
        <taxon>Nitrosomonadales</taxon>
        <taxon>Thiobacillaceae</taxon>
        <taxon>Thiobacillus</taxon>
    </lineage>
</organism>
<feature type="chain" id="PRO_0000284342" description="Endoribonuclease YbeY">
    <location>
        <begin position="1"/>
        <end position="147"/>
    </location>
</feature>
<feature type="binding site" evidence="1">
    <location>
        <position position="109"/>
    </location>
    <ligand>
        <name>Zn(2+)</name>
        <dbReference type="ChEBI" id="CHEBI:29105"/>
        <note>catalytic</note>
    </ligand>
</feature>
<feature type="binding site" evidence="1">
    <location>
        <position position="113"/>
    </location>
    <ligand>
        <name>Zn(2+)</name>
        <dbReference type="ChEBI" id="CHEBI:29105"/>
        <note>catalytic</note>
    </ligand>
</feature>
<feature type="binding site" evidence="1">
    <location>
        <position position="119"/>
    </location>
    <ligand>
        <name>Zn(2+)</name>
        <dbReference type="ChEBI" id="CHEBI:29105"/>
        <note>catalytic</note>
    </ligand>
</feature>